<evidence type="ECO:0000255" key="1">
    <source>
        <dbReference type="HAMAP-Rule" id="MF_00323"/>
    </source>
</evidence>
<accession>Q8U9F7</accession>
<gene>
    <name evidence="1" type="primary">hemH</name>
    <name type="ordered locus">Atu3771</name>
    <name type="ORF">AGR_L_2129</name>
</gene>
<keyword id="KW-0963">Cytoplasm</keyword>
<keyword id="KW-0350">Heme biosynthesis</keyword>
<keyword id="KW-0408">Iron</keyword>
<keyword id="KW-0456">Lyase</keyword>
<keyword id="KW-0479">Metal-binding</keyword>
<keyword id="KW-0627">Porphyrin biosynthesis</keyword>
<keyword id="KW-1185">Reference proteome</keyword>
<comment type="function">
    <text evidence="1">Catalyzes the ferrous insertion into protoporphyrin IX.</text>
</comment>
<comment type="catalytic activity">
    <reaction evidence="1">
        <text>heme b + 2 H(+) = protoporphyrin IX + Fe(2+)</text>
        <dbReference type="Rhea" id="RHEA:22584"/>
        <dbReference type="ChEBI" id="CHEBI:15378"/>
        <dbReference type="ChEBI" id="CHEBI:29033"/>
        <dbReference type="ChEBI" id="CHEBI:57306"/>
        <dbReference type="ChEBI" id="CHEBI:60344"/>
        <dbReference type="EC" id="4.98.1.1"/>
    </reaction>
</comment>
<comment type="pathway">
    <text evidence="1">Porphyrin-containing compound metabolism; protoheme biosynthesis; protoheme from protoporphyrin-IX: step 1/1.</text>
</comment>
<comment type="subcellular location">
    <subcellularLocation>
        <location evidence="1">Cytoplasm</location>
    </subcellularLocation>
</comment>
<comment type="similarity">
    <text evidence="1">Belongs to the ferrochelatase family.</text>
</comment>
<feature type="chain" id="PRO_0000175099" description="Ferrochelatase">
    <location>
        <begin position="1"/>
        <end position="344"/>
    </location>
</feature>
<feature type="binding site" evidence="1">
    <location>
        <position position="214"/>
    </location>
    <ligand>
        <name>Fe cation</name>
        <dbReference type="ChEBI" id="CHEBI:24875"/>
    </ligand>
</feature>
<feature type="binding site" evidence="1">
    <location>
        <position position="295"/>
    </location>
    <ligand>
        <name>Fe cation</name>
        <dbReference type="ChEBI" id="CHEBI:24875"/>
    </ligand>
</feature>
<reference key="1">
    <citation type="journal article" date="2001" name="Science">
        <title>The genome of the natural genetic engineer Agrobacterium tumefaciens C58.</title>
        <authorList>
            <person name="Wood D.W."/>
            <person name="Setubal J.C."/>
            <person name="Kaul R."/>
            <person name="Monks D.E."/>
            <person name="Kitajima J.P."/>
            <person name="Okura V.K."/>
            <person name="Zhou Y."/>
            <person name="Chen L."/>
            <person name="Wood G.E."/>
            <person name="Almeida N.F. Jr."/>
            <person name="Woo L."/>
            <person name="Chen Y."/>
            <person name="Paulsen I.T."/>
            <person name="Eisen J.A."/>
            <person name="Karp P.D."/>
            <person name="Bovee D. Sr."/>
            <person name="Chapman P."/>
            <person name="Clendenning J."/>
            <person name="Deatherage G."/>
            <person name="Gillet W."/>
            <person name="Grant C."/>
            <person name="Kutyavin T."/>
            <person name="Levy R."/>
            <person name="Li M.-J."/>
            <person name="McClelland E."/>
            <person name="Palmieri A."/>
            <person name="Raymond C."/>
            <person name="Rouse G."/>
            <person name="Saenphimmachak C."/>
            <person name="Wu Z."/>
            <person name="Romero P."/>
            <person name="Gordon D."/>
            <person name="Zhang S."/>
            <person name="Yoo H."/>
            <person name="Tao Y."/>
            <person name="Biddle P."/>
            <person name="Jung M."/>
            <person name="Krespan W."/>
            <person name="Perry M."/>
            <person name="Gordon-Kamm B."/>
            <person name="Liao L."/>
            <person name="Kim S."/>
            <person name="Hendrick C."/>
            <person name="Zhao Z.-Y."/>
            <person name="Dolan M."/>
            <person name="Chumley F."/>
            <person name="Tingey S.V."/>
            <person name="Tomb J.-F."/>
            <person name="Gordon M.P."/>
            <person name="Olson M.V."/>
            <person name="Nester E.W."/>
        </authorList>
    </citation>
    <scope>NUCLEOTIDE SEQUENCE [LARGE SCALE GENOMIC DNA]</scope>
    <source>
        <strain>C58 / ATCC 33970</strain>
    </source>
</reference>
<reference key="2">
    <citation type="journal article" date="2001" name="Science">
        <title>Genome sequence of the plant pathogen and biotechnology agent Agrobacterium tumefaciens C58.</title>
        <authorList>
            <person name="Goodner B."/>
            <person name="Hinkle G."/>
            <person name="Gattung S."/>
            <person name="Miller N."/>
            <person name="Blanchard M."/>
            <person name="Qurollo B."/>
            <person name="Goldman B.S."/>
            <person name="Cao Y."/>
            <person name="Askenazi M."/>
            <person name="Halling C."/>
            <person name="Mullin L."/>
            <person name="Houmiel K."/>
            <person name="Gordon J."/>
            <person name="Vaudin M."/>
            <person name="Iartchouk O."/>
            <person name="Epp A."/>
            <person name="Liu F."/>
            <person name="Wollam C."/>
            <person name="Allinger M."/>
            <person name="Doughty D."/>
            <person name="Scott C."/>
            <person name="Lappas C."/>
            <person name="Markelz B."/>
            <person name="Flanagan C."/>
            <person name="Crowell C."/>
            <person name="Gurson J."/>
            <person name="Lomo C."/>
            <person name="Sear C."/>
            <person name="Strub G."/>
            <person name="Cielo C."/>
            <person name="Slater S."/>
        </authorList>
    </citation>
    <scope>NUCLEOTIDE SEQUENCE [LARGE SCALE GENOMIC DNA]</scope>
    <source>
        <strain>C58 / ATCC 33970</strain>
    </source>
</reference>
<organism>
    <name type="scientific">Agrobacterium fabrum (strain C58 / ATCC 33970)</name>
    <name type="common">Agrobacterium tumefaciens (strain C58)</name>
    <dbReference type="NCBI Taxonomy" id="176299"/>
    <lineage>
        <taxon>Bacteria</taxon>
        <taxon>Pseudomonadati</taxon>
        <taxon>Pseudomonadota</taxon>
        <taxon>Alphaproteobacteria</taxon>
        <taxon>Hyphomicrobiales</taxon>
        <taxon>Rhizobiaceae</taxon>
        <taxon>Rhizobium/Agrobacterium group</taxon>
        <taxon>Agrobacterium</taxon>
        <taxon>Agrobacterium tumefaciens complex</taxon>
    </lineage>
</organism>
<sequence>MATELSALPANHPRVTFGKVGVLLVNLGTPDGTDYWPMRRYLAEFLSDKRVIEWSRLYWYPILYGIVLNKRPQKVGKAYEEIWNHERNESYLRTYTRSQGELMAAALKDFPNVVVDWAMRYGQPSIASRIDALKEQGCEKILLFPLYPQYAASTTATVNDKAFEHLMKLRWQPAIRTVPPYHDDPAYIEGLAASVKNHLATLDWEPEMLITSFHGIPQSYFKKGDPYYCHCQKTARLLREALGRTEKNFMITFQSRFGPEEWLQPYTDKTVEKLASEGIKRIAVMNPGFVSDCLETLEEIAGEAGEIFLHNGGEKFTHIPCLNDSTEGMNVLEKVVRRELQGWV</sequence>
<proteinExistence type="inferred from homology"/>
<name>HEMH_AGRFC</name>
<protein>
    <recommendedName>
        <fullName evidence="1">Ferrochelatase</fullName>
        <ecNumber evidence="1">4.98.1.1</ecNumber>
    </recommendedName>
    <alternativeName>
        <fullName evidence="1">Heme synthase</fullName>
    </alternativeName>
    <alternativeName>
        <fullName evidence="1">Protoheme ferro-lyase</fullName>
    </alternativeName>
</protein>
<dbReference type="EC" id="4.98.1.1" evidence="1"/>
<dbReference type="EMBL" id="AE007870">
    <property type="protein sequence ID" value="AAK89636.2"/>
    <property type="molecule type" value="Genomic_DNA"/>
</dbReference>
<dbReference type="PIR" id="AG3020">
    <property type="entry name" value="AG3020"/>
</dbReference>
<dbReference type="PIR" id="B98264">
    <property type="entry name" value="B98264"/>
</dbReference>
<dbReference type="RefSeq" id="NP_356851.2">
    <property type="nucleotide sequence ID" value="NC_003063.2"/>
</dbReference>
<dbReference type="RefSeq" id="WP_010973308.1">
    <property type="nucleotide sequence ID" value="NC_003063.2"/>
</dbReference>
<dbReference type="SMR" id="Q8U9F7"/>
<dbReference type="STRING" id="176299.Atu3771"/>
<dbReference type="EnsemblBacteria" id="AAK89636">
    <property type="protein sequence ID" value="AAK89636"/>
    <property type="gene ID" value="Atu3771"/>
</dbReference>
<dbReference type="GeneID" id="1135645"/>
<dbReference type="KEGG" id="atu:Atu3771"/>
<dbReference type="PATRIC" id="fig|176299.10.peg.3607"/>
<dbReference type="eggNOG" id="COG0276">
    <property type="taxonomic scope" value="Bacteria"/>
</dbReference>
<dbReference type="HOGENOM" id="CLU_018884_0_0_5"/>
<dbReference type="OrthoDB" id="9809741at2"/>
<dbReference type="PhylomeDB" id="Q8U9F7"/>
<dbReference type="BioCyc" id="AGRO:ATU3771-MONOMER"/>
<dbReference type="UniPathway" id="UPA00252">
    <property type="reaction ID" value="UER00325"/>
</dbReference>
<dbReference type="Proteomes" id="UP000000813">
    <property type="component" value="Chromosome linear"/>
</dbReference>
<dbReference type="GO" id="GO:0005737">
    <property type="term" value="C:cytoplasm"/>
    <property type="evidence" value="ECO:0007669"/>
    <property type="project" value="UniProtKB-SubCell"/>
</dbReference>
<dbReference type="GO" id="GO:0004325">
    <property type="term" value="F:ferrochelatase activity"/>
    <property type="evidence" value="ECO:0007669"/>
    <property type="project" value="UniProtKB-UniRule"/>
</dbReference>
<dbReference type="GO" id="GO:0046872">
    <property type="term" value="F:metal ion binding"/>
    <property type="evidence" value="ECO:0007669"/>
    <property type="project" value="UniProtKB-KW"/>
</dbReference>
<dbReference type="GO" id="GO:0006783">
    <property type="term" value="P:heme biosynthetic process"/>
    <property type="evidence" value="ECO:0007669"/>
    <property type="project" value="UniProtKB-UniRule"/>
</dbReference>
<dbReference type="CDD" id="cd00419">
    <property type="entry name" value="Ferrochelatase_C"/>
    <property type="match status" value="1"/>
</dbReference>
<dbReference type="CDD" id="cd03411">
    <property type="entry name" value="Ferrochelatase_N"/>
    <property type="match status" value="1"/>
</dbReference>
<dbReference type="FunFam" id="3.40.50.1400:FF:000002">
    <property type="entry name" value="Ferrochelatase"/>
    <property type="match status" value="1"/>
</dbReference>
<dbReference type="Gene3D" id="3.40.50.1400">
    <property type="match status" value="2"/>
</dbReference>
<dbReference type="HAMAP" id="MF_00323">
    <property type="entry name" value="Ferrochelatase"/>
    <property type="match status" value="1"/>
</dbReference>
<dbReference type="InterPro" id="IPR001015">
    <property type="entry name" value="Ferrochelatase"/>
</dbReference>
<dbReference type="InterPro" id="IPR019772">
    <property type="entry name" value="Ferrochelatase_AS"/>
</dbReference>
<dbReference type="InterPro" id="IPR033644">
    <property type="entry name" value="Ferrochelatase_C"/>
</dbReference>
<dbReference type="InterPro" id="IPR033659">
    <property type="entry name" value="Ferrochelatase_N"/>
</dbReference>
<dbReference type="NCBIfam" id="TIGR00109">
    <property type="entry name" value="hemH"/>
    <property type="match status" value="1"/>
</dbReference>
<dbReference type="PANTHER" id="PTHR11108">
    <property type="entry name" value="FERROCHELATASE"/>
    <property type="match status" value="1"/>
</dbReference>
<dbReference type="PANTHER" id="PTHR11108:SF1">
    <property type="entry name" value="FERROCHELATASE, MITOCHONDRIAL"/>
    <property type="match status" value="1"/>
</dbReference>
<dbReference type="Pfam" id="PF00762">
    <property type="entry name" value="Ferrochelatase"/>
    <property type="match status" value="1"/>
</dbReference>
<dbReference type="SUPFAM" id="SSF53800">
    <property type="entry name" value="Chelatase"/>
    <property type="match status" value="1"/>
</dbReference>
<dbReference type="PROSITE" id="PS00534">
    <property type="entry name" value="FERROCHELATASE"/>
    <property type="match status" value="1"/>
</dbReference>